<feature type="chain" id="PRO_0000418836" description="Angiomotin-like protein 1">
    <location>
        <begin position="1"/>
        <end position="960"/>
    </location>
</feature>
<feature type="region of interest" description="Disordered" evidence="4">
    <location>
        <begin position="196"/>
        <end position="248"/>
    </location>
</feature>
<feature type="region of interest" description="Disordered" evidence="4">
    <location>
        <begin position="277"/>
        <end position="317"/>
    </location>
</feature>
<feature type="region of interest" description="Disordered" evidence="4">
    <location>
        <begin position="381"/>
        <end position="407"/>
    </location>
</feature>
<feature type="region of interest" description="Disordered" evidence="4">
    <location>
        <begin position="413"/>
        <end position="432"/>
    </location>
</feature>
<feature type="region of interest" description="Disordered" evidence="4">
    <location>
        <begin position="775"/>
        <end position="826"/>
    </location>
</feature>
<feature type="region of interest" description="Disordered" evidence="4">
    <location>
        <begin position="842"/>
        <end position="952"/>
    </location>
</feature>
<feature type="coiled-coil region" evidence="3">
    <location>
        <begin position="261"/>
        <end position="281"/>
    </location>
</feature>
<feature type="coiled-coil region" evidence="3">
    <location>
        <begin position="440"/>
        <end position="641"/>
    </location>
</feature>
<feature type="coiled-coil region" evidence="3">
    <location>
        <begin position="667"/>
        <end position="697"/>
    </location>
</feature>
<feature type="coiled-coil region" evidence="3">
    <location>
        <begin position="731"/>
        <end position="761"/>
    </location>
</feature>
<feature type="short sequence motif" description="PDZ-binding" evidence="1">
    <location>
        <begin position="957"/>
        <end position="960"/>
    </location>
</feature>
<feature type="compositionally biased region" description="Low complexity" evidence="4">
    <location>
        <begin position="388"/>
        <end position="401"/>
    </location>
</feature>
<feature type="compositionally biased region" description="Polar residues" evidence="4">
    <location>
        <begin position="804"/>
        <end position="817"/>
    </location>
</feature>
<feature type="compositionally biased region" description="Low complexity" evidence="4">
    <location>
        <begin position="845"/>
        <end position="870"/>
    </location>
</feature>
<feature type="compositionally biased region" description="Polar residues" evidence="4">
    <location>
        <begin position="898"/>
        <end position="911"/>
    </location>
</feature>
<feature type="modified residue" description="Phosphoserine" evidence="2">
    <location>
        <position position="243"/>
    </location>
</feature>
<feature type="modified residue" description="Phosphoserine" evidence="2">
    <location>
        <position position="271"/>
    </location>
</feature>
<feature type="modified residue" description="Phosphoserine" evidence="2">
    <location>
        <position position="297"/>
    </location>
</feature>
<feature type="modified residue" description="Phosphoserine" evidence="2">
    <location>
        <position position="722"/>
    </location>
</feature>
<feature type="modified residue" description="Phosphoserine" evidence="2">
    <location>
        <position position="795"/>
    </location>
</feature>
<feature type="modified residue" description="Phosphoserine" evidence="2">
    <location>
        <position position="807"/>
    </location>
</feature>
<feature type="modified residue" description="Phosphoserine" evidence="2">
    <location>
        <position position="830"/>
    </location>
</feature>
<feature type="modified residue" description="Phosphoserine" evidence="2">
    <location>
        <position position="904"/>
    </location>
</feature>
<feature type="modified residue" description="Phosphothreonine" evidence="2">
    <location>
        <position position="906"/>
    </location>
</feature>
<feature type="modified residue" description="Phosphoserine" evidence="2">
    <location>
        <position position="910"/>
    </location>
</feature>
<organism>
    <name type="scientific">Bos taurus</name>
    <name type="common">Bovine</name>
    <dbReference type="NCBI Taxonomy" id="9913"/>
    <lineage>
        <taxon>Eukaryota</taxon>
        <taxon>Metazoa</taxon>
        <taxon>Chordata</taxon>
        <taxon>Craniata</taxon>
        <taxon>Vertebrata</taxon>
        <taxon>Euteleostomi</taxon>
        <taxon>Mammalia</taxon>
        <taxon>Eutheria</taxon>
        <taxon>Laurasiatheria</taxon>
        <taxon>Artiodactyla</taxon>
        <taxon>Ruminantia</taxon>
        <taxon>Pecora</taxon>
        <taxon>Bovidae</taxon>
        <taxon>Bovinae</taxon>
        <taxon>Bos</taxon>
    </lineage>
</organism>
<sequence length="960" mass="106671">MLMLHVKRNTCEHTFKCPPPACYSPSSPVQILEDPSYFFPDFQLYPGRHEASLTVEANSSIREKVVEDPLCNFHPPNFPRIPEVEMRGSEDAAAGTVLQRLIQEQLRYGTPTENMNLLAIQHQATGSAGPAHPTNFSSTENLAQEDPQMVYQSARQEPQGQEHQVDNTVMEKQVRSAQPQQNNEELPTYEEAKAQSQFFRGQQPPPPPPQQQPGAVGHSYYMAGGASQKARTEGRPTVSRANSGQAHKDEALKELKQGHVRSLSERIMQLSLERNGAKQHLPGPGNGKAFKAGGGPSPAQPAAKMLDPRGPPPEYPFKTKQMVSPVSKTQEHGLFYSDQHPGLLHEMVKPYPAPQPARTEVAVLRYQPPPEYGVTSRPCQLPFPSTAQQHSPVSSQNSSVSGPLHSVPLPLAPPMALGAAPPPPAASPSQQLGPDAFAIVERAQQMVEILTEENRVLHQELQGYYDNADKLHKFEKELQRISEAYESLVKSTTKRESLDKAMRNKLEGEIRRLHDFNRDLRDRLETANRQLSSREYDGHEDRAAEGLYASQNKEFLKEKEKLEMELAAVRTASEDHRRHIEILDQALSNAQARVIKLEEELREKQAYVEKVEKLQQALTQLQSACEKREQMERRLRTWLERELDALRTQQKHGNSQPASLPEYNAPALMELVREKEERILALEADMTKWEQKYVEESAIRHFAMSAAATAAAERDTTIVNHSRNGSYGESSLEAHIWQEEEEVVQATRRCQDMEYTIKNLHAKIIEKDAMIKVLQQRSRKDAGKTDSSSLRPARSVPSIAAATGTHSRQTSLTSSQLAEERKEEKTWKGSIATGLLLGKEHNDHASTPLLPTPSAATLSPPTPGTSASSAHAKTGSKDSSTQTDKSAELFWPGVASLPTRSRLSGTPSNSPVLKHPAAKGTAEKLENSPGHGKSPDHKGRVSNLLHKPEFPDGEMMEVLI</sequence>
<accession>E1BEQ5</accession>
<keyword id="KW-0965">Cell junction</keyword>
<keyword id="KW-0175">Coiled coil</keyword>
<keyword id="KW-0597">Phosphoprotein</keyword>
<keyword id="KW-1185">Reference proteome</keyword>
<keyword id="KW-0796">Tight junction</keyword>
<keyword id="KW-0832">Ubl conjugation</keyword>
<keyword id="KW-0879">Wnt signaling pathway</keyword>
<gene>
    <name type="primary">AMOTL1</name>
</gene>
<dbReference type="EMBL" id="DAAA02040143">
    <property type="status" value="NOT_ANNOTATED_CDS"/>
    <property type="molecule type" value="Genomic_DNA"/>
</dbReference>
<dbReference type="SMR" id="E1BEQ5"/>
<dbReference type="FunCoup" id="E1BEQ5">
    <property type="interactions" value="408"/>
</dbReference>
<dbReference type="STRING" id="9913.ENSBTAP00000025212"/>
<dbReference type="PaxDb" id="9913-ENSBTAP00000025212"/>
<dbReference type="eggNOG" id="ENOG502QVI5">
    <property type="taxonomic scope" value="Eukaryota"/>
</dbReference>
<dbReference type="HOGENOM" id="CLU_009937_1_0_1"/>
<dbReference type="InParanoid" id="E1BEQ5"/>
<dbReference type="OrthoDB" id="5974715at2759"/>
<dbReference type="TreeFam" id="TF333368"/>
<dbReference type="Proteomes" id="UP000009136">
    <property type="component" value="Unplaced"/>
</dbReference>
<dbReference type="GO" id="GO:0005923">
    <property type="term" value="C:bicellular tight junction"/>
    <property type="evidence" value="ECO:0000318"/>
    <property type="project" value="GO_Central"/>
</dbReference>
<dbReference type="GO" id="GO:0031410">
    <property type="term" value="C:cytoplasmic vesicle"/>
    <property type="evidence" value="ECO:0000318"/>
    <property type="project" value="GO_Central"/>
</dbReference>
<dbReference type="GO" id="GO:0005886">
    <property type="term" value="C:plasma membrane"/>
    <property type="evidence" value="ECO:0000318"/>
    <property type="project" value="GO_Central"/>
</dbReference>
<dbReference type="GO" id="GO:0030036">
    <property type="term" value="P:actin cytoskeleton organization"/>
    <property type="evidence" value="ECO:0000318"/>
    <property type="project" value="GO_Central"/>
</dbReference>
<dbReference type="GO" id="GO:0001525">
    <property type="term" value="P:angiogenesis"/>
    <property type="evidence" value="ECO:0000318"/>
    <property type="project" value="GO_Central"/>
</dbReference>
<dbReference type="GO" id="GO:0003365">
    <property type="term" value="P:establishment of cell polarity involved in ameboidal cell migration"/>
    <property type="evidence" value="ECO:0000318"/>
    <property type="project" value="GO_Central"/>
</dbReference>
<dbReference type="GO" id="GO:0035329">
    <property type="term" value="P:hippo signaling"/>
    <property type="evidence" value="ECO:0000318"/>
    <property type="project" value="GO_Central"/>
</dbReference>
<dbReference type="GO" id="GO:0030334">
    <property type="term" value="P:regulation of cell migration"/>
    <property type="evidence" value="ECO:0000318"/>
    <property type="project" value="GO_Central"/>
</dbReference>
<dbReference type="GO" id="GO:0016055">
    <property type="term" value="P:Wnt signaling pathway"/>
    <property type="evidence" value="ECO:0007669"/>
    <property type="project" value="UniProtKB-KW"/>
</dbReference>
<dbReference type="InterPro" id="IPR009114">
    <property type="entry name" value="Angiomotin"/>
</dbReference>
<dbReference type="InterPro" id="IPR051747">
    <property type="entry name" value="Angiomotin-like"/>
</dbReference>
<dbReference type="InterPro" id="IPR024646">
    <property type="entry name" value="Angiomotin_C"/>
</dbReference>
<dbReference type="PANTHER" id="PTHR14826">
    <property type="entry name" value="ANGIOMOTIN"/>
    <property type="match status" value="1"/>
</dbReference>
<dbReference type="PANTHER" id="PTHR14826:SF12">
    <property type="entry name" value="ANGIOMOTIN-LIKE PROTEIN 1"/>
    <property type="match status" value="1"/>
</dbReference>
<dbReference type="Pfam" id="PF12240">
    <property type="entry name" value="Angiomotin_C"/>
    <property type="match status" value="1"/>
</dbReference>
<dbReference type="PRINTS" id="PR01807">
    <property type="entry name" value="ANGIOMOTIN"/>
</dbReference>
<proteinExistence type="inferred from homology"/>
<protein>
    <recommendedName>
        <fullName>Angiomotin-like protein 1</fullName>
    </recommendedName>
</protein>
<name>AMOL1_BOVIN</name>
<evidence type="ECO:0000250" key="1"/>
<evidence type="ECO:0000250" key="2">
    <source>
        <dbReference type="UniProtKB" id="Q8IY63"/>
    </source>
</evidence>
<evidence type="ECO:0000255" key="3"/>
<evidence type="ECO:0000256" key="4">
    <source>
        <dbReference type="SAM" id="MobiDB-lite"/>
    </source>
</evidence>
<evidence type="ECO:0000305" key="5"/>
<reference key="1">
    <citation type="journal article" date="2009" name="Genome Biol.">
        <title>A whole-genome assembly of the domestic cow, Bos taurus.</title>
        <authorList>
            <person name="Zimin A.V."/>
            <person name="Delcher A.L."/>
            <person name="Florea L."/>
            <person name="Kelley D.R."/>
            <person name="Schatz M.C."/>
            <person name="Puiu D."/>
            <person name="Hanrahan F."/>
            <person name="Pertea G."/>
            <person name="Van Tassell C.P."/>
            <person name="Sonstegard T.S."/>
            <person name="Marcais G."/>
            <person name="Roberts M."/>
            <person name="Subramanian P."/>
            <person name="Yorke J.A."/>
            <person name="Salzberg S.L."/>
        </authorList>
    </citation>
    <scope>NUCLEOTIDE SEQUENCE [LARGE SCALE GENOMIC DNA]</scope>
    <source>
        <strain>Hereford</strain>
    </source>
</reference>
<comment type="function">
    <text evidence="1">Inhibits the Wnt/beta-catenin signaling pathway, probably by recruiting CTNNB1 to recycling endosomes and hence preventing its translocation to the nucleus.</text>
</comment>
<comment type="subcellular location">
    <subcellularLocation>
        <location evidence="1">Cell junction</location>
        <location evidence="1">Tight junction</location>
    </subcellularLocation>
</comment>
<comment type="PTM">
    <text evidence="1">Polyubiquitinated by NEDD4, leading to proteasomal degradation.</text>
</comment>
<comment type="similarity">
    <text evidence="5">Belongs to the angiomotin family.</text>
</comment>